<proteinExistence type="evidence at protein level"/>
<reference evidence="4" key="1">
    <citation type="journal article" date="2006" name="J. Immunol.">
        <title>A novel 40-kDa protein containing six repeats of an epidermal growth factor-like domain functions as a pattern recognition protein for lipopolysaccharide.</title>
        <authorList>
            <person name="Ju J.S."/>
            <person name="Cho M.H."/>
            <person name="Brade L."/>
            <person name="Kim J.H."/>
            <person name="Park J.W."/>
            <person name="Ha N.C."/>
            <person name="Soederhaell I."/>
            <person name="Soederhaell K."/>
            <person name="Brade H."/>
            <person name="Lee B.L."/>
        </authorList>
    </citation>
    <scope>NUCLEOTIDE SEQUENCE [MRNA]</scope>
    <scope>PROTEIN SEQUENCE OF 24-43; 79-85; 86-104; 118-146; 197-203; 206-212 AND 232-238</scope>
    <scope>FUNCTION</scope>
    <scope>SUBCELLULAR LOCATION</scope>
    <source>
        <tissue evidence="4">Plasma</tissue>
    </source>
</reference>
<comment type="function">
    <text evidence="1">Binds to lipopolysaccharides (LPS) present on the cell walls of Gram-negative bacteria, behaving as a pattern recognition receptor (PRR) (PubMed:16849495). Induces bacterial aggregation and enhances their subsequent clearance by the innate immune response (PubMed:16849495). Binds to the inner core oligosaccharides region of rough-type bacterial LPS (PubMed:16849495). Displays activity against the Gram-negative bacterium E.coli (PubMed:16849495). Does not display any activity against the Gram-positive bacterium S.aureus or the fungi C.albicans (PubMed:16849495).</text>
</comment>
<comment type="subcellular location">
    <subcellularLocation>
        <location evidence="1">Secreted</location>
    </subcellularLocation>
    <text evidence="1">Detected in larval plasma.</text>
</comment>
<comment type="miscellaneous">
    <text evidence="1">In mouse bone marrow-derived mast cells (BMMC), inhibits LPS-induced expression of the inflammatory cytokine Interleukin-6 (IL-6).</text>
</comment>
<feature type="signal peptide" evidence="1">
    <location>
        <begin position="1"/>
        <end position="23"/>
    </location>
</feature>
<feature type="chain" id="PRO_5004190114" description="Epidermal growth factor-like protein" evidence="1">
    <location>
        <begin position="24"/>
        <end position="317"/>
    </location>
</feature>
<feature type="domain" description="EGF-like 1" evidence="3">
    <location>
        <begin position="93"/>
        <end position="128"/>
    </location>
</feature>
<feature type="domain" description="EGF-like 2" evidence="3">
    <location>
        <begin position="130"/>
        <end position="161"/>
    </location>
</feature>
<feature type="domain" description="EGF-like 3" evidence="3">
    <location>
        <begin position="163"/>
        <end position="195"/>
    </location>
</feature>
<feature type="domain" description="EGF-like 4" evidence="3">
    <location>
        <begin position="208"/>
        <end position="243"/>
    </location>
</feature>
<feature type="domain" description="EGF-like 5" evidence="3">
    <location>
        <begin position="245"/>
        <end position="280"/>
    </location>
</feature>
<feature type="domain" description="EGF-like 6" evidence="3">
    <location>
        <begin position="282"/>
        <end position="315"/>
    </location>
</feature>
<feature type="region of interest" description="May be required for E.coli agglutination activity" evidence="1">
    <location>
        <begin position="24"/>
        <end position="33"/>
    </location>
</feature>
<feature type="disulfide bond" evidence="2">
    <location>
        <begin position="98"/>
        <end position="107"/>
    </location>
</feature>
<feature type="disulfide bond" evidence="2">
    <location>
        <begin position="102"/>
        <end position="113"/>
    </location>
</feature>
<feature type="disulfide bond" evidence="2">
    <location>
        <begin position="115"/>
        <end position="127"/>
    </location>
</feature>
<feature type="disulfide bond" evidence="2">
    <location>
        <begin position="131"/>
        <end position="140"/>
    </location>
</feature>
<feature type="disulfide bond" evidence="2">
    <location>
        <begin position="135"/>
        <end position="145"/>
    </location>
</feature>
<feature type="disulfide bond" evidence="2">
    <location>
        <begin position="147"/>
        <end position="160"/>
    </location>
</feature>
<feature type="disulfide bond" evidence="2">
    <location>
        <begin position="164"/>
        <end position="174"/>
    </location>
</feature>
<feature type="disulfide bond" evidence="2">
    <location>
        <begin position="168"/>
        <end position="180"/>
    </location>
</feature>
<feature type="disulfide bond" evidence="2">
    <location>
        <begin position="182"/>
        <end position="194"/>
    </location>
</feature>
<feature type="disulfide bond" evidence="2">
    <location>
        <begin position="213"/>
        <end position="222"/>
    </location>
</feature>
<feature type="disulfide bond" evidence="2">
    <location>
        <begin position="217"/>
        <end position="228"/>
    </location>
</feature>
<feature type="disulfide bond" evidence="2">
    <location>
        <begin position="230"/>
        <end position="242"/>
    </location>
</feature>
<feature type="disulfide bond" evidence="2">
    <location>
        <begin position="246"/>
        <end position="255"/>
    </location>
</feature>
<feature type="disulfide bond" evidence="2">
    <location>
        <begin position="250"/>
        <end position="261"/>
    </location>
</feature>
<feature type="disulfide bond" evidence="2">
    <location>
        <begin position="263"/>
        <end position="279"/>
    </location>
</feature>
<feature type="disulfide bond" evidence="2">
    <location>
        <begin position="283"/>
        <end position="292"/>
    </location>
</feature>
<feature type="disulfide bond" evidence="2">
    <location>
        <begin position="287"/>
        <end position="298"/>
    </location>
</feature>
<feature type="disulfide bond" evidence="2">
    <location>
        <begin position="300"/>
        <end position="314"/>
    </location>
</feature>
<dbReference type="EMBL" id="AB201466">
    <property type="protein sequence ID" value="BAE94686.1"/>
    <property type="molecule type" value="mRNA"/>
</dbReference>
<dbReference type="GO" id="GO:0005615">
    <property type="term" value="C:extracellular space"/>
    <property type="evidence" value="ECO:0000314"/>
    <property type="project" value="UniProtKB"/>
</dbReference>
<dbReference type="GO" id="GO:0140367">
    <property type="term" value="P:antibacterial innate immune response"/>
    <property type="evidence" value="ECO:0000314"/>
    <property type="project" value="UniProtKB"/>
</dbReference>
<dbReference type="GO" id="GO:0050829">
    <property type="term" value="P:defense response to Gram-negative bacterium"/>
    <property type="evidence" value="ECO:0000314"/>
    <property type="project" value="UniProtKB"/>
</dbReference>
<dbReference type="GO" id="GO:0032497">
    <property type="term" value="P:detection of lipopolysaccharide"/>
    <property type="evidence" value="ECO:0000314"/>
    <property type="project" value="UniProtKB"/>
</dbReference>
<dbReference type="Gene3D" id="2.10.25.10">
    <property type="entry name" value="Laminin"/>
    <property type="match status" value="5"/>
</dbReference>
<dbReference type="InterPro" id="IPR000742">
    <property type="entry name" value="EGF-like_dom"/>
</dbReference>
<dbReference type="InterPro" id="IPR053255">
    <property type="entry name" value="EGF-like_domain"/>
</dbReference>
<dbReference type="InterPro" id="IPR049388">
    <property type="entry name" value="FBN_EGF_N"/>
</dbReference>
<dbReference type="InterPro" id="IPR009030">
    <property type="entry name" value="Growth_fac_rcpt_cys_sf"/>
</dbReference>
<dbReference type="PANTHER" id="PTHR24047">
    <property type="entry name" value="FI01909P-RELATED"/>
    <property type="match status" value="1"/>
</dbReference>
<dbReference type="PANTHER" id="PTHR24047:SF32">
    <property type="entry name" value="FI01909P-RELATED"/>
    <property type="match status" value="1"/>
</dbReference>
<dbReference type="Pfam" id="PF21364">
    <property type="entry name" value="EGF_FBN_1st"/>
    <property type="match status" value="1"/>
</dbReference>
<dbReference type="SMART" id="SM00181">
    <property type="entry name" value="EGF"/>
    <property type="match status" value="5"/>
</dbReference>
<dbReference type="SUPFAM" id="SSF57184">
    <property type="entry name" value="Growth factor receptor domain"/>
    <property type="match status" value="2"/>
</dbReference>
<dbReference type="PROSITE" id="PS01186">
    <property type="entry name" value="EGF_2"/>
    <property type="match status" value="3"/>
</dbReference>
<protein>
    <recommendedName>
        <fullName evidence="4">Epidermal growth factor-like protein</fullName>
    </recommendedName>
    <alternativeName>
        <fullName evidence="2">LPS recognition protein</fullName>
        <shortName evidence="2">LPR</shortName>
    </alternativeName>
</protein>
<evidence type="ECO:0000269" key="1">
    <source>
    </source>
</evidence>
<evidence type="ECO:0000303" key="2">
    <source>
    </source>
</evidence>
<evidence type="ECO:0000305" key="3">
    <source>
    </source>
</evidence>
<evidence type="ECO:0000312" key="4">
    <source>
        <dbReference type="EMBL" id="BAE94686.1"/>
    </source>
</evidence>
<accession>Q1HAY7</accession>
<organism evidence="4">
    <name type="scientific">Holotrichia diomphalia</name>
    <name type="common">Korean black chafer</name>
    <dbReference type="NCBI Taxonomy" id="33394"/>
    <lineage>
        <taxon>Eukaryota</taxon>
        <taxon>Metazoa</taxon>
        <taxon>Ecdysozoa</taxon>
        <taxon>Arthropoda</taxon>
        <taxon>Hexapoda</taxon>
        <taxon>Insecta</taxon>
        <taxon>Pterygota</taxon>
        <taxon>Neoptera</taxon>
        <taxon>Endopterygota</taxon>
        <taxon>Coleoptera</taxon>
        <taxon>Polyphaga</taxon>
        <taxon>Scarabaeiformia</taxon>
        <taxon>Scarabaeidae</taxon>
        <taxon>Melolonthinae</taxon>
        <taxon>Holotrichia</taxon>
    </lineage>
</organism>
<gene>
    <name evidence="4" type="primary">EGF-like</name>
</gene>
<keyword id="KW-0044">Antibiotic</keyword>
<keyword id="KW-0929">Antimicrobial</keyword>
<keyword id="KW-0903">Direct protein sequencing</keyword>
<keyword id="KW-1015">Disulfide bond</keyword>
<keyword id="KW-0391">Immunity</keyword>
<keyword id="KW-0964">Secreted</keyword>
<keyword id="KW-0732">Signal</keyword>
<sequence length="317" mass="33037">MDFKIFLFLTAIFMIVGVTVSTATTNPTAPRAYRPRINTTAGVCELEVPIVNILPPELKHTAHTIRGNGSAPGFSKIKICCSGYKIVAHTPFHCTPDCPSGCGLGNCTAPNVCTCNKGAGFGPDGKCISVCPGRCLNGQCYGNFCNCNSGFVLEPNGRYCTGGCTRNCGPGGQCVGNNQCSCLSGFALNSQGTCQMICAPGFQQMGSACEPLCPKGCVNGECVAPGQCRCKSGYALNSSKVCAPKCSQPCYNGFCSAPNVCTCKEGYIKDATSRNGNRCIAYCAAGCPNGTCSAPNFCICKQGYIKQSKGSNVCVKQ</sequence>
<name>EGFLR_HOLDI</name>